<gene>
    <name evidence="1" type="primary">rpmB</name>
    <name type="ordered locus">Swit_2326</name>
</gene>
<comment type="similarity">
    <text evidence="1">Belongs to the bacterial ribosomal protein bL28 family.</text>
</comment>
<sequence length="97" mass="10724">MSRICELTGKGRQVGHNVSHANNKTKRTFLPNLQNVTLISDSLGKGVKLRVSTHGLRSVEHVGGLDNWLLKTSDDLLSLRARRLKRDIAKKQQAVAA</sequence>
<organism>
    <name type="scientific">Rhizorhabdus wittichii (strain DSM 6014 / CCUG 31198 / JCM 15750 / NBRC 105917 / EY 4224 / RW1)</name>
    <name type="common">Sphingomonas wittichii</name>
    <dbReference type="NCBI Taxonomy" id="392499"/>
    <lineage>
        <taxon>Bacteria</taxon>
        <taxon>Pseudomonadati</taxon>
        <taxon>Pseudomonadota</taxon>
        <taxon>Alphaproteobacteria</taxon>
        <taxon>Sphingomonadales</taxon>
        <taxon>Sphingomonadaceae</taxon>
        <taxon>Rhizorhabdus</taxon>
    </lineage>
</organism>
<feature type="chain" id="PRO_1000007363" description="Large ribosomal subunit protein bL28">
    <location>
        <begin position="1"/>
        <end position="97"/>
    </location>
</feature>
<proteinExistence type="inferred from homology"/>
<evidence type="ECO:0000255" key="1">
    <source>
        <dbReference type="HAMAP-Rule" id="MF_00373"/>
    </source>
</evidence>
<evidence type="ECO:0000305" key="2"/>
<reference key="1">
    <citation type="journal article" date="2010" name="J. Bacteriol.">
        <title>Genome sequence of the dioxin-mineralizing bacterium Sphingomonas wittichii RW1.</title>
        <authorList>
            <person name="Miller T.R."/>
            <person name="Delcher A.L."/>
            <person name="Salzberg S.L."/>
            <person name="Saunders E."/>
            <person name="Detter J.C."/>
            <person name="Halden R.U."/>
        </authorList>
    </citation>
    <scope>NUCLEOTIDE SEQUENCE [LARGE SCALE GENOMIC DNA]</scope>
    <source>
        <strain>DSM 6014 / CCUG 31198 / JCM 15750 / NBRC 105917 / EY 4224 / RW1</strain>
    </source>
</reference>
<name>RL28_RHIWR</name>
<accession>A5V8R9</accession>
<keyword id="KW-1185">Reference proteome</keyword>
<keyword id="KW-0687">Ribonucleoprotein</keyword>
<keyword id="KW-0689">Ribosomal protein</keyword>
<dbReference type="EMBL" id="CP000699">
    <property type="protein sequence ID" value="ABQ68685.1"/>
    <property type="molecule type" value="Genomic_DNA"/>
</dbReference>
<dbReference type="SMR" id="A5V8R9"/>
<dbReference type="STRING" id="392499.Swit_2326"/>
<dbReference type="PaxDb" id="392499-Swit_2326"/>
<dbReference type="KEGG" id="swi:Swit_2326"/>
<dbReference type="eggNOG" id="COG0227">
    <property type="taxonomic scope" value="Bacteria"/>
</dbReference>
<dbReference type="HOGENOM" id="CLU_064548_4_2_5"/>
<dbReference type="OrthoDB" id="9805609at2"/>
<dbReference type="Proteomes" id="UP000001989">
    <property type="component" value="Chromosome"/>
</dbReference>
<dbReference type="GO" id="GO:0022625">
    <property type="term" value="C:cytosolic large ribosomal subunit"/>
    <property type="evidence" value="ECO:0007669"/>
    <property type="project" value="TreeGrafter"/>
</dbReference>
<dbReference type="GO" id="GO:0003735">
    <property type="term" value="F:structural constituent of ribosome"/>
    <property type="evidence" value="ECO:0007669"/>
    <property type="project" value="InterPro"/>
</dbReference>
<dbReference type="GO" id="GO:0006412">
    <property type="term" value="P:translation"/>
    <property type="evidence" value="ECO:0007669"/>
    <property type="project" value="UniProtKB-UniRule"/>
</dbReference>
<dbReference type="Gene3D" id="2.30.170.40">
    <property type="entry name" value="Ribosomal protein L28/L24"/>
    <property type="match status" value="1"/>
</dbReference>
<dbReference type="HAMAP" id="MF_00373">
    <property type="entry name" value="Ribosomal_bL28"/>
    <property type="match status" value="1"/>
</dbReference>
<dbReference type="InterPro" id="IPR026569">
    <property type="entry name" value="Ribosomal_bL28"/>
</dbReference>
<dbReference type="InterPro" id="IPR034704">
    <property type="entry name" value="Ribosomal_bL28/bL31-like_sf"/>
</dbReference>
<dbReference type="InterPro" id="IPR001383">
    <property type="entry name" value="Ribosomal_bL28_bact-type"/>
</dbReference>
<dbReference type="InterPro" id="IPR037147">
    <property type="entry name" value="Ribosomal_bL28_sf"/>
</dbReference>
<dbReference type="NCBIfam" id="TIGR00009">
    <property type="entry name" value="L28"/>
    <property type="match status" value="1"/>
</dbReference>
<dbReference type="PANTHER" id="PTHR13528">
    <property type="entry name" value="39S RIBOSOMAL PROTEIN L28, MITOCHONDRIAL"/>
    <property type="match status" value="1"/>
</dbReference>
<dbReference type="PANTHER" id="PTHR13528:SF2">
    <property type="entry name" value="LARGE RIBOSOMAL SUBUNIT PROTEIN BL28M"/>
    <property type="match status" value="1"/>
</dbReference>
<dbReference type="Pfam" id="PF00830">
    <property type="entry name" value="Ribosomal_L28"/>
    <property type="match status" value="1"/>
</dbReference>
<dbReference type="SUPFAM" id="SSF143800">
    <property type="entry name" value="L28p-like"/>
    <property type="match status" value="1"/>
</dbReference>
<protein>
    <recommendedName>
        <fullName evidence="1">Large ribosomal subunit protein bL28</fullName>
    </recommendedName>
    <alternativeName>
        <fullName evidence="2">50S ribosomal protein L28</fullName>
    </alternativeName>
</protein>